<organism>
    <name type="scientific">Agrobacterium fabrum (strain C58 / ATCC 33970)</name>
    <name type="common">Agrobacterium tumefaciens (strain C58)</name>
    <dbReference type="NCBI Taxonomy" id="176299"/>
    <lineage>
        <taxon>Bacteria</taxon>
        <taxon>Pseudomonadati</taxon>
        <taxon>Pseudomonadota</taxon>
        <taxon>Alphaproteobacteria</taxon>
        <taxon>Hyphomicrobiales</taxon>
        <taxon>Rhizobiaceae</taxon>
        <taxon>Rhizobium/Agrobacterium group</taxon>
        <taxon>Agrobacterium</taxon>
        <taxon>Agrobacterium tumefaciens complex</taxon>
    </lineage>
</organism>
<sequence>MSKRESAKYKIDRRMGENIWGRPKSPVNRREYGPGQHGQRRKGKMSDFGTQLRAKQKLKGYYGELREKQFRATFDEANRRKGDTSENLISLLESRLDAIVYRAKFVPTVFASRQFINHGHVTVNGVRVNIGSYRCKAGDVIEVRQKSKQLVTVLEAVQLAERDVPDYIEVDHNKMVATYARVPSLSDVPYPVVMEPHLVVEFYSR</sequence>
<gene>
    <name evidence="1" type="primary">rpsD</name>
    <name type="ordered locus">Atu1860</name>
    <name type="ORF">AGR_C_3413</name>
</gene>
<reference key="1">
    <citation type="journal article" date="2001" name="Science">
        <title>The genome of the natural genetic engineer Agrobacterium tumefaciens C58.</title>
        <authorList>
            <person name="Wood D.W."/>
            <person name="Setubal J.C."/>
            <person name="Kaul R."/>
            <person name="Monks D.E."/>
            <person name="Kitajima J.P."/>
            <person name="Okura V.K."/>
            <person name="Zhou Y."/>
            <person name="Chen L."/>
            <person name="Wood G.E."/>
            <person name="Almeida N.F. Jr."/>
            <person name="Woo L."/>
            <person name="Chen Y."/>
            <person name="Paulsen I.T."/>
            <person name="Eisen J.A."/>
            <person name="Karp P.D."/>
            <person name="Bovee D. Sr."/>
            <person name="Chapman P."/>
            <person name="Clendenning J."/>
            <person name="Deatherage G."/>
            <person name="Gillet W."/>
            <person name="Grant C."/>
            <person name="Kutyavin T."/>
            <person name="Levy R."/>
            <person name="Li M.-J."/>
            <person name="McClelland E."/>
            <person name="Palmieri A."/>
            <person name="Raymond C."/>
            <person name="Rouse G."/>
            <person name="Saenphimmachak C."/>
            <person name="Wu Z."/>
            <person name="Romero P."/>
            <person name="Gordon D."/>
            <person name="Zhang S."/>
            <person name="Yoo H."/>
            <person name="Tao Y."/>
            <person name="Biddle P."/>
            <person name="Jung M."/>
            <person name="Krespan W."/>
            <person name="Perry M."/>
            <person name="Gordon-Kamm B."/>
            <person name="Liao L."/>
            <person name="Kim S."/>
            <person name="Hendrick C."/>
            <person name="Zhao Z.-Y."/>
            <person name="Dolan M."/>
            <person name="Chumley F."/>
            <person name="Tingey S.V."/>
            <person name="Tomb J.-F."/>
            <person name="Gordon M.P."/>
            <person name="Olson M.V."/>
            <person name="Nester E.W."/>
        </authorList>
    </citation>
    <scope>NUCLEOTIDE SEQUENCE [LARGE SCALE GENOMIC DNA]</scope>
    <source>
        <strain>C58 / ATCC 33970</strain>
    </source>
</reference>
<reference key="2">
    <citation type="journal article" date="2001" name="Science">
        <title>Genome sequence of the plant pathogen and biotechnology agent Agrobacterium tumefaciens C58.</title>
        <authorList>
            <person name="Goodner B."/>
            <person name="Hinkle G."/>
            <person name="Gattung S."/>
            <person name="Miller N."/>
            <person name="Blanchard M."/>
            <person name="Qurollo B."/>
            <person name="Goldman B.S."/>
            <person name="Cao Y."/>
            <person name="Askenazi M."/>
            <person name="Halling C."/>
            <person name="Mullin L."/>
            <person name="Houmiel K."/>
            <person name="Gordon J."/>
            <person name="Vaudin M."/>
            <person name="Iartchouk O."/>
            <person name="Epp A."/>
            <person name="Liu F."/>
            <person name="Wollam C."/>
            <person name="Allinger M."/>
            <person name="Doughty D."/>
            <person name="Scott C."/>
            <person name="Lappas C."/>
            <person name="Markelz B."/>
            <person name="Flanagan C."/>
            <person name="Crowell C."/>
            <person name="Gurson J."/>
            <person name="Lomo C."/>
            <person name="Sear C."/>
            <person name="Strub G."/>
            <person name="Cielo C."/>
            <person name="Slater S."/>
        </authorList>
    </citation>
    <scope>NUCLEOTIDE SEQUENCE [LARGE SCALE GENOMIC DNA]</scope>
    <source>
        <strain>C58 / ATCC 33970</strain>
    </source>
</reference>
<comment type="function">
    <text evidence="1">One of the primary rRNA binding proteins, it binds directly to 16S rRNA where it nucleates assembly of the body of the 30S subunit.</text>
</comment>
<comment type="function">
    <text evidence="1">With S5 and S12 plays an important role in translational accuracy.</text>
</comment>
<comment type="subunit">
    <text evidence="1">Part of the 30S ribosomal subunit. Contacts protein S5. The interaction surface between S4 and S5 is involved in control of translational fidelity.</text>
</comment>
<comment type="similarity">
    <text evidence="1">Belongs to the universal ribosomal protein uS4 family.</text>
</comment>
<dbReference type="EMBL" id="AE007869">
    <property type="protein sequence ID" value="AAK87627.1"/>
    <property type="molecule type" value="Genomic_DNA"/>
</dbReference>
<dbReference type="PIR" id="AB2805">
    <property type="entry name" value="AB2805"/>
</dbReference>
<dbReference type="PIR" id="B97584">
    <property type="entry name" value="B97584"/>
</dbReference>
<dbReference type="RefSeq" id="NP_354842.1">
    <property type="nucleotide sequence ID" value="NC_003062.2"/>
</dbReference>
<dbReference type="RefSeq" id="WP_010971918.1">
    <property type="nucleotide sequence ID" value="NC_003062.2"/>
</dbReference>
<dbReference type="SMR" id="Q8UEA0"/>
<dbReference type="STRING" id="176299.Atu1860"/>
<dbReference type="EnsemblBacteria" id="AAK87627">
    <property type="protein sequence ID" value="AAK87627"/>
    <property type="gene ID" value="Atu1860"/>
</dbReference>
<dbReference type="GeneID" id="1133898"/>
<dbReference type="KEGG" id="atu:Atu1860"/>
<dbReference type="PATRIC" id="fig|176299.10.peg.1873"/>
<dbReference type="eggNOG" id="COG0522">
    <property type="taxonomic scope" value="Bacteria"/>
</dbReference>
<dbReference type="HOGENOM" id="CLU_092403_0_0_5"/>
<dbReference type="OrthoDB" id="9803672at2"/>
<dbReference type="PhylomeDB" id="Q8UEA0"/>
<dbReference type="BioCyc" id="AGRO:ATU1860-MONOMER"/>
<dbReference type="Proteomes" id="UP000000813">
    <property type="component" value="Chromosome circular"/>
</dbReference>
<dbReference type="GO" id="GO:0015935">
    <property type="term" value="C:small ribosomal subunit"/>
    <property type="evidence" value="ECO:0007669"/>
    <property type="project" value="InterPro"/>
</dbReference>
<dbReference type="GO" id="GO:0019843">
    <property type="term" value="F:rRNA binding"/>
    <property type="evidence" value="ECO:0007669"/>
    <property type="project" value="UniProtKB-UniRule"/>
</dbReference>
<dbReference type="GO" id="GO:0003735">
    <property type="term" value="F:structural constituent of ribosome"/>
    <property type="evidence" value="ECO:0007669"/>
    <property type="project" value="InterPro"/>
</dbReference>
<dbReference type="GO" id="GO:0042274">
    <property type="term" value="P:ribosomal small subunit biogenesis"/>
    <property type="evidence" value="ECO:0007669"/>
    <property type="project" value="TreeGrafter"/>
</dbReference>
<dbReference type="GO" id="GO:0006412">
    <property type="term" value="P:translation"/>
    <property type="evidence" value="ECO:0007669"/>
    <property type="project" value="UniProtKB-UniRule"/>
</dbReference>
<dbReference type="CDD" id="cd00165">
    <property type="entry name" value="S4"/>
    <property type="match status" value="1"/>
</dbReference>
<dbReference type="FunFam" id="3.10.290.10:FF:000001">
    <property type="entry name" value="30S ribosomal protein S4"/>
    <property type="match status" value="1"/>
</dbReference>
<dbReference type="Gene3D" id="1.10.1050.10">
    <property type="entry name" value="Ribosomal Protein S4 Delta 41, Chain A, domain 1"/>
    <property type="match status" value="1"/>
</dbReference>
<dbReference type="Gene3D" id="3.10.290.10">
    <property type="entry name" value="RNA-binding S4 domain"/>
    <property type="match status" value="1"/>
</dbReference>
<dbReference type="HAMAP" id="MF_01306_B">
    <property type="entry name" value="Ribosomal_uS4_B"/>
    <property type="match status" value="1"/>
</dbReference>
<dbReference type="InterPro" id="IPR022801">
    <property type="entry name" value="Ribosomal_uS4"/>
</dbReference>
<dbReference type="InterPro" id="IPR005709">
    <property type="entry name" value="Ribosomal_uS4_bac-type"/>
</dbReference>
<dbReference type="InterPro" id="IPR018079">
    <property type="entry name" value="Ribosomal_uS4_CS"/>
</dbReference>
<dbReference type="InterPro" id="IPR001912">
    <property type="entry name" value="Ribosomal_uS4_N"/>
</dbReference>
<dbReference type="InterPro" id="IPR002942">
    <property type="entry name" value="S4_RNA-bd"/>
</dbReference>
<dbReference type="InterPro" id="IPR036986">
    <property type="entry name" value="S4_RNA-bd_sf"/>
</dbReference>
<dbReference type="NCBIfam" id="NF003717">
    <property type="entry name" value="PRK05327.1"/>
    <property type="match status" value="1"/>
</dbReference>
<dbReference type="NCBIfam" id="TIGR01017">
    <property type="entry name" value="rpsD_bact"/>
    <property type="match status" value="1"/>
</dbReference>
<dbReference type="PANTHER" id="PTHR11831">
    <property type="entry name" value="30S 40S RIBOSOMAL PROTEIN"/>
    <property type="match status" value="1"/>
</dbReference>
<dbReference type="PANTHER" id="PTHR11831:SF4">
    <property type="entry name" value="SMALL RIBOSOMAL SUBUNIT PROTEIN US4M"/>
    <property type="match status" value="1"/>
</dbReference>
<dbReference type="Pfam" id="PF00163">
    <property type="entry name" value="Ribosomal_S4"/>
    <property type="match status" value="1"/>
</dbReference>
<dbReference type="Pfam" id="PF01479">
    <property type="entry name" value="S4"/>
    <property type="match status" value="1"/>
</dbReference>
<dbReference type="SMART" id="SM01390">
    <property type="entry name" value="Ribosomal_S4"/>
    <property type="match status" value="1"/>
</dbReference>
<dbReference type="SMART" id="SM00363">
    <property type="entry name" value="S4"/>
    <property type="match status" value="1"/>
</dbReference>
<dbReference type="SUPFAM" id="SSF55174">
    <property type="entry name" value="Alpha-L RNA-binding motif"/>
    <property type="match status" value="1"/>
</dbReference>
<dbReference type="PROSITE" id="PS00632">
    <property type="entry name" value="RIBOSOMAL_S4"/>
    <property type="match status" value="1"/>
</dbReference>
<dbReference type="PROSITE" id="PS50889">
    <property type="entry name" value="S4"/>
    <property type="match status" value="1"/>
</dbReference>
<keyword id="KW-1185">Reference proteome</keyword>
<keyword id="KW-0687">Ribonucleoprotein</keyword>
<keyword id="KW-0689">Ribosomal protein</keyword>
<keyword id="KW-0694">RNA-binding</keyword>
<keyword id="KW-0699">rRNA-binding</keyword>
<feature type="chain" id="PRO_0000132327" description="Small ribosomal subunit protein uS4">
    <location>
        <begin position="1"/>
        <end position="205"/>
    </location>
</feature>
<feature type="domain" description="S4 RNA-binding" evidence="1">
    <location>
        <begin position="94"/>
        <end position="157"/>
    </location>
</feature>
<feature type="region of interest" description="Disordered" evidence="2">
    <location>
        <begin position="14"/>
        <end position="49"/>
    </location>
</feature>
<accession>Q8UEA0</accession>
<evidence type="ECO:0000255" key="1">
    <source>
        <dbReference type="HAMAP-Rule" id="MF_01306"/>
    </source>
</evidence>
<evidence type="ECO:0000256" key="2">
    <source>
        <dbReference type="SAM" id="MobiDB-lite"/>
    </source>
</evidence>
<evidence type="ECO:0000305" key="3"/>
<protein>
    <recommendedName>
        <fullName evidence="1">Small ribosomal subunit protein uS4</fullName>
    </recommendedName>
    <alternativeName>
        <fullName evidence="3">30S ribosomal protein S4</fullName>
    </alternativeName>
</protein>
<proteinExistence type="inferred from homology"/>
<name>RS4_AGRFC</name>